<evidence type="ECO:0000250" key="1">
    <source>
        <dbReference type="UniProtKB" id="Q5JUK3"/>
    </source>
</evidence>
<evidence type="ECO:0000250" key="2">
    <source>
        <dbReference type="UniProtKB" id="Q6ZPR4"/>
    </source>
</evidence>
<evidence type="ECO:0000250" key="3">
    <source>
        <dbReference type="UniProtKB" id="Q9Z258"/>
    </source>
</evidence>
<evidence type="ECO:0000255" key="4"/>
<evidence type="ECO:0000255" key="5">
    <source>
        <dbReference type="PROSITE-ProRule" id="PRU00543"/>
    </source>
</evidence>
<evidence type="ECO:0000256" key="6">
    <source>
        <dbReference type="SAM" id="MobiDB-lite"/>
    </source>
</evidence>
<evidence type="ECO:0000269" key="7">
    <source>
    </source>
</evidence>
<evidence type="ECO:0000303" key="8">
    <source>
    </source>
</evidence>
<evidence type="ECO:0000305" key="9"/>
<evidence type="ECO:0007744" key="10">
    <source>
        <dbReference type="PDB" id="5A6E"/>
    </source>
</evidence>
<evidence type="ECO:0007744" key="11">
    <source>
        <dbReference type="PDB" id="5A6F"/>
    </source>
</evidence>
<evidence type="ECO:0007744" key="12">
    <source>
        <dbReference type="PDB" id="5A6G"/>
    </source>
</evidence>
<evidence type="ECO:0007744" key="13">
    <source>
        <dbReference type="PDB" id="5U70"/>
    </source>
</evidence>
<evidence type="ECO:0007744" key="14">
    <source>
        <dbReference type="PDB" id="5U76"/>
    </source>
</evidence>
<keyword id="KW-0002">3D-structure</keyword>
<keyword id="KW-0106">Calcium</keyword>
<keyword id="KW-1003">Cell membrane</keyword>
<keyword id="KW-0325">Glycoprotein</keyword>
<keyword id="KW-0407">Ion channel</keyword>
<keyword id="KW-0406">Ion transport</keyword>
<keyword id="KW-0472">Membrane</keyword>
<keyword id="KW-0479">Metal-binding</keyword>
<keyword id="KW-0630">Potassium</keyword>
<keyword id="KW-0631">Potassium channel</keyword>
<keyword id="KW-0633">Potassium transport</keyword>
<keyword id="KW-1185">Reference proteome</keyword>
<keyword id="KW-0915">Sodium</keyword>
<keyword id="KW-0812">Transmembrane</keyword>
<keyword id="KW-1133">Transmembrane helix</keyword>
<keyword id="KW-0813">Transport</keyword>
<keyword id="KW-0862">Zinc</keyword>
<proteinExistence type="evidence at protein level"/>
<sequence>MARAKLKNSPSESNSHVKTVPPATTEDVRGVSPLLPARRMGSLGSDVGQRPHAEDFSMDSSFSQVQVEFYVNENTFKERLKLFFIKNQRSSLRIRLFNFSLKLLTCLLYIVRVLLDNPEEGIGCWECEKQNYTLFNQSTKINWSHIFWVDRKLPLWAVQVSIALISFLETMLLIYLSYKGNIWEQIFRISFILEMINTVPFIITIFWPPLRNLFIPVFLNCWLAKYALENMINDLHRAIQRTQSAMFNQVLILICTLLCLVFTGTCGIQHLERAGEKLSLFKSFYFCIVTFSTVGYGDVTPKIWPSQLLVVIMICVALVVLPLQFEELVYLWMERQKSGGNYSRHRAQTEKHVVLCVSSLKIDLLMDFLNEFYAHPRLQDYYVVILCPTEMDIQVRRVLQIPLWSQRVIYLQGSALKDQDLMRAKMDNGEACFILSSRNEVDRTAADHQTILRAWAVKDFAPNCPLYVQILKPENKFHVKFADHVVCEEECKYAMLALNCVCPATSTLITLLVHTSRGQEGQESPEQWQRMYGRCSGNEVYHIRMGDSKFFMEYEGKSFTYAAFHAHKKYGVCLIGIRREENKSILLNPGPRHIMAASDTCFYINITKEENSAFIFKQAEKQKKKGFAGRGTYDGPSRLPVHSIIASMGTVAMDLQNTECRPTNSSKLALPAENGSGNRRPSIAPVLELADTSSLLPCDLLSDQSEDEMTQSDEEGSAVVEYVKGYPPNSPYIGSSPTLCHLLPEKAPFCCLRLDKGCKHNSFEDAKAYGFKNKLIIVSAETAGNGLYNFIVPLRAYYRSRKELNPIVLLLDNKPEHHFLEAICCFPMVYYMEGTIDNLDSLLQCGIIYADNLVVVDKESTMSAEEDYMADAKTIVNVQTMFRLFPSLSIITELTHPSNMRFMQFRAKDSYSLALSKLEKKERENGSNLAFMFRLPFAAGRVFSISMLDTLLYQSFVKDYMITITRLLLGLDTTPGSGYLCAMKITEDDLWIRTYGRLFQKLCSSSAEIPIGIYRTESHMFATSEPHDIRAQSQISINVEDCEDTKDVKEHWGIKTGHHRNSCSSDQSEHPLLRRKSMQWARRLSRKGNKHSGKTAEWISQQRLSLYRRSERQELSELVKNRMKHLGLPTTGYDEMNDHQNTLSYVLINPPPDTRLELNDIVYLIRSDPLAHVANDGHSRKSSCSNKLGPCNPETRDETQL</sequence>
<accession>Q8QFV0</accession>
<name>KCNT1_CHICK</name>
<dbReference type="EMBL" id="AY093434">
    <property type="protein sequence ID" value="AAM18770.1"/>
    <property type="molecule type" value="mRNA"/>
</dbReference>
<dbReference type="RefSeq" id="NP_989893.1">
    <property type="nucleotide sequence ID" value="NM_204562.3"/>
</dbReference>
<dbReference type="PDB" id="5A6E">
    <property type="method" value="EM"/>
    <property type="resolution" value="4.50 A"/>
    <property type="chains" value="B=244-337, C=351-1019, C=1141-1171"/>
</dbReference>
<dbReference type="PDB" id="5A6F">
    <property type="method" value="EM"/>
    <property type="resolution" value="4.20 A"/>
    <property type="chains" value="C=351-1019, C=1141-1171"/>
</dbReference>
<dbReference type="PDB" id="5A6G">
    <property type="method" value="EM"/>
    <property type="resolution" value="4.50 A"/>
    <property type="chains" value="B=244-337"/>
</dbReference>
<dbReference type="PDB" id="5U70">
    <property type="method" value="EM"/>
    <property type="resolution" value="3.70 A"/>
    <property type="chains" value="A=1-1201"/>
</dbReference>
<dbReference type="PDB" id="5U76">
    <property type="method" value="EM"/>
    <property type="resolution" value="4.20 A"/>
    <property type="chains" value="A=1-1201"/>
</dbReference>
<dbReference type="PDBsum" id="5A6E"/>
<dbReference type="PDBsum" id="5A6F"/>
<dbReference type="PDBsum" id="5A6G"/>
<dbReference type="PDBsum" id="5U70"/>
<dbReference type="PDBsum" id="5U76"/>
<dbReference type="EMDB" id="EMD-3062"/>
<dbReference type="EMDB" id="EMD-3063"/>
<dbReference type="EMDB" id="EMD-3064"/>
<dbReference type="EMDB" id="EMD-8515"/>
<dbReference type="EMDB" id="EMD-8517"/>
<dbReference type="SMR" id="Q8QFV0"/>
<dbReference type="DIP" id="DIP-61789N"/>
<dbReference type="FunCoup" id="Q8QFV0">
    <property type="interactions" value="351"/>
</dbReference>
<dbReference type="STRING" id="9031.ENSGALP00000067334"/>
<dbReference type="GlyCosmos" id="Q8QFV0">
    <property type="glycosylation" value="2 sites, No reported glycans"/>
</dbReference>
<dbReference type="GlyGen" id="Q8QFV0">
    <property type="glycosylation" value="2 sites"/>
</dbReference>
<dbReference type="PaxDb" id="9031-ENSGALP00000038129"/>
<dbReference type="GeneID" id="395248"/>
<dbReference type="KEGG" id="gga:395248"/>
<dbReference type="CTD" id="57582"/>
<dbReference type="VEuPathDB" id="HostDB:geneid_395248"/>
<dbReference type="eggNOG" id="KOG3193">
    <property type="taxonomic scope" value="Eukaryota"/>
</dbReference>
<dbReference type="HOGENOM" id="CLU_003370_0_0_1"/>
<dbReference type="InParanoid" id="Q8QFV0"/>
<dbReference type="OrthoDB" id="257992at2759"/>
<dbReference type="PhylomeDB" id="Q8QFV0"/>
<dbReference type="EvolutionaryTrace" id="Q8QFV0"/>
<dbReference type="PRO" id="PR:Q8QFV0"/>
<dbReference type="Proteomes" id="UP000000539">
    <property type="component" value="Chromosome 17"/>
</dbReference>
<dbReference type="Bgee" id="ENSGALG00000001645">
    <property type="expression patterns" value="Expressed in cerebellum and 1 other cell type or tissue"/>
</dbReference>
<dbReference type="GO" id="GO:0005886">
    <property type="term" value="C:plasma membrane"/>
    <property type="evidence" value="ECO:0000250"/>
    <property type="project" value="UniProtKB"/>
</dbReference>
<dbReference type="GO" id="GO:0005228">
    <property type="term" value="F:intracellular sodium-activated potassium channel activity"/>
    <property type="evidence" value="ECO:0000318"/>
    <property type="project" value="GO_Central"/>
</dbReference>
<dbReference type="GO" id="GO:0046872">
    <property type="term" value="F:metal ion binding"/>
    <property type="evidence" value="ECO:0007669"/>
    <property type="project" value="UniProtKB-KW"/>
</dbReference>
<dbReference type="GO" id="GO:0015271">
    <property type="term" value="F:outward rectifier potassium channel activity"/>
    <property type="evidence" value="ECO:0000250"/>
    <property type="project" value="UniProtKB"/>
</dbReference>
<dbReference type="GO" id="GO:0071805">
    <property type="term" value="P:potassium ion transmembrane transport"/>
    <property type="evidence" value="ECO:0000250"/>
    <property type="project" value="UniProtKB"/>
</dbReference>
<dbReference type="GO" id="GO:0051289">
    <property type="term" value="P:protein homotetramerization"/>
    <property type="evidence" value="ECO:0000250"/>
    <property type="project" value="UniProtKB"/>
</dbReference>
<dbReference type="FunFam" id="3.40.50.720:FF:000011">
    <property type="entry name" value="Potassium channel subfamily T member 1"/>
    <property type="match status" value="1"/>
</dbReference>
<dbReference type="FunFam" id="3.40.50.720:FF:000034">
    <property type="entry name" value="Potassium channel subfamily T member 1"/>
    <property type="match status" value="1"/>
</dbReference>
<dbReference type="FunFam" id="1.10.287.70:FF:000069">
    <property type="entry name" value="Potassium sodium-activated channel subfamily T member 1"/>
    <property type="match status" value="1"/>
</dbReference>
<dbReference type="Gene3D" id="1.10.287.70">
    <property type="match status" value="1"/>
</dbReference>
<dbReference type="Gene3D" id="3.40.50.720">
    <property type="entry name" value="NAD(P)-binding Rossmann-like Domain"/>
    <property type="match status" value="2"/>
</dbReference>
<dbReference type="InterPro" id="IPR003929">
    <property type="entry name" value="K_chnl_BK_asu"/>
</dbReference>
<dbReference type="InterPro" id="IPR013099">
    <property type="entry name" value="K_chnl_dom"/>
</dbReference>
<dbReference type="InterPro" id="IPR047871">
    <property type="entry name" value="K_chnl_Slo-like"/>
</dbReference>
<dbReference type="InterPro" id="IPR003148">
    <property type="entry name" value="RCK_N"/>
</dbReference>
<dbReference type="PANTHER" id="PTHR10027">
    <property type="entry name" value="CALCIUM-ACTIVATED POTASSIUM CHANNEL ALPHA CHAIN"/>
    <property type="match status" value="1"/>
</dbReference>
<dbReference type="PANTHER" id="PTHR10027:SF14">
    <property type="entry name" value="POTASSIUM CHANNEL SUBFAMILY T MEMBER 1"/>
    <property type="match status" value="1"/>
</dbReference>
<dbReference type="Pfam" id="PF03493">
    <property type="entry name" value="BK_channel_a"/>
    <property type="match status" value="1"/>
</dbReference>
<dbReference type="Pfam" id="PF07885">
    <property type="entry name" value="Ion_trans_2"/>
    <property type="match status" value="1"/>
</dbReference>
<dbReference type="Pfam" id="PF22614">
    <property type="entry name" value="Slo-like_RCK"/>
    <property type="match status" value="2"/>
</dbReference>
<dbReference type="SUPFAM" id="SSF81324">
    <property type="entry name" value="Voltage-gated potassium channels"/>
    <property type="match status" value="1"/>
</dbReference>
<dbReference type="PROSITE" id="PS51201">
    <property type="entry name" value="RCK_N"/>
    <property type="match status" value="2"/>
</dbReference>
<reference key="1">
    <citation type="submission" date="2002-03" db="EMBL/GenBank/DDBJ databases">
        <title>Cloning and characterization of potassium channel subunit (slack) from chick brain.</title>
        <authorList>
            <person name="Li M."/>
            <person name="Caruso L."/>
            <person name="Bell T."/>
            <person name="Tu T."/>
            <person name="Oberholtzer J.C."/>
        </authorList>
    </citation>
    <scope>NUCLEOTIDE SEQUENCE [MRNA]</scope>
    <source>
        <tissue>Forebrain</tissue>
    </source>
</reference>
<reference evidence="10 11 12" key="2">
    <citation type="journal article" date="2015" name="Nature">
        <title>Cryo-electron microscopy structure of the Slo2.2 Na(+)-activated K(+) channel.</title>
        <authorList>
            <person name="Hite R.K."/>
            <person name="Yuan P."/>
            <person name="Li Z."/>
            <person name="Hsuing Y."/>
            <person name="Walz T."/>
            <person name="MacKinnon R."/>
        </authorList>
    </citation>
    <scope>STRUCTURE BY ELECTRON MICROSCOPY (4.20 ANGSTROMS) OF 351-1019</scope>
</reference>
<reference evidence="13 14" key="3">
    <citation type="journal article" date="2017" name="Cell">
        <title>Structural Titration of Slo2.2, a Na+-Dependent K+ Channel.</title>
        <authorList>
            <person name="Hite R.K."/>
            <person name="MacKinnon R."/>
        </authorList>
    </citation>
    <scope>STRUCTURE BY ELECTRON MICROSCOPY (3.70 ANGSTROMS)</scope>
    <scope>FUNCTION</scope>
    <scope>ACTIVITY REGULATION</scope>
</reference>
<feature type="chain" id="PRO_0000054093" description="Potassium channel subfamily T member 1">
    <location>
        <begin position="1"/>
        <end position="1201"/>
    </location>
</feature>
<feature type="topological domain" description="Cytoplasmic" evidence="4">
    <location>
        <begin position="1"/>
        <end position="92"/>
    </location>
</feature>
<feature type="transmembrane region" description="Helical; Name=Segment S1" evidence="7 13">
    <location>
        <begin position="93"/>
        <end position="115"/>
    </location>
</feature>
<feature type="topological domain" description="Extracellular" evidence="4">
    <location>
        <begin position="116"/>
        <end position="152"/>
    </location>
</feature>
<feature type="transmembrane region" description="Helical; Name=Segment S2" evidence="7 13">
    <location>
        <begin position="153"/>
        <end position="175"/>
    </location>
</feature>
<feature type="topological domain" description="Cytoplasmic" evidence="4">
    <location>
        <begin position="176"/>
        <end position="184"/>
    </location>
</feature>
<feature type="transmembrane region" description="Helical; Name=Segment S3" evidence="7 13">
    <location>
        <begin position="185"/>
        <end position="206"/>
    </location>
</feature>
<feature type="topological domain" description="Extracellular" evidence="4">
    <location>
        <begin position="207"/>
        <end position="216"/>
    </location>
</feature>
<feature type="transmembrane region" description="Helical; Name=Segment S4" evidence="7 13">
    <location>
        <begin position="217"/>
        <end position="229"/>
    </location>
</feature>
<feature type="topological domain" description="Cytoplasmic" evidence="4">
    <location>
        <begin position="230"/>
        <end position="249"/>
    </location>
</feature>
<feature type="transmembrane region" description="Helical; Name=Segment S5" evidence="7 13">
    <location>
        <begin position="250"/>
        <end position="272"/>
    </location>
</feature>
<feature type="topological domain" description="Extracellular" evidence="4">
    <location>
        <begin position="273"/>
        <end position="279"/>
    </location>
</feature>
<feature type="intramembrane region" description="Pore-forming">
    <location>
        <begin position="280"/>
        <end position="300"/>
    </location>
</feature>
<feature type="topological domain" description="Extracellular" evidence="4">
    <location>
        <begin position="301"/>
        <end position="304"/>
    </location>
</feature>
<feature type="transmembrane region" description="Helical; Name=Segment S6" evidence="7 13">
    <location>
        <begin position="305"/>
        <end position="326"/>
    </location>
</feature>
<feature type="topological domain" description="Cytoplasmic" evidence="4">
    <location>
        <begin position="327"/>
        <end position="1201"/>
    </location>
</feature>
<feature type="domain" description="RCK N-terminal 1" evidence="5">
    <location>
        <begin position="350"/>
        <end position="486"/>
    </location>
</feature>
<feature type="domain" description="RCK N-terminal 2" evidence="5">
    <location>
        <begin position="773"/>
        <end position="913"/>
    </location>
</feature>
<feature type="region of interest" description="Disordered" evidence="6">
    <location>
        <begin position="1"/>
        <end position="28"/>
    </location>
</feature>
<feature type="region of interest" description="Disordered" evidence="6">
    <location>
        <begin position="1175"/>
        <end position="1201"/>
    </location>
</feature>
<feature type="compositionally biased region" description="Polar residues" evidence="6">
    <location>
        <begin position="8"/>
        <end position="17"/>
    </location>
</feature>
<feature type="binding site" evidence="1">
    <location>
        <position position="294"/>
    </location>
    <ligand>
        <name>K(+)</name>
        <dbReference type="ChEBI" id="CHEBI:29103"/>
        <label>1</label>
        <note>ligand shared between homotetrameric partners</note>
    </ligand>
</feature>
<feature type="binding site" evidence="1">
    <location>
        <position position="295"/>
    </location>
    <ligand>
        <name>K(+)</name>
        <dbReference type="ChEBI" id="CHEBI:29103"/>
        <label>1</label>
        <note>ligand shared between homotetrameric partners</note>
    </ligand>
</feature>
<feature type="binding site" evidence="1">
    <location>
        <position position="511"/>
    </location>
    <ligand>
        <name>Na(+)</name>
        <dbReference type="ChEBI" id="CHEBI:29101"/>
        <label>1</label>
    </ligand>
</feature>
<feature type="binding site" evidence="1">
    <location>
        <position position="514"/>
    </location>
    <ligand>
        <name>Na(+)</name>
        <dbReference type="ChEBI" id="CHEBI:29101"/>
        <label>1</label>
    </ligand>
</feature>
<feature type="binding site" evidence="1">
    <location>
        <position position="536"/>
    </location>
    <ligand>
        <name>Na(+)</name>
        <dbReference type="ChEBI" id="CHEBI:29101"/>
        <label>1</label>
    </ligand>
</feature>
<feature type="binding site" evidence="1">
    <location>
        <position position="538"/>
    </location>
    <ligand>
        <name>Na(+)</name>
        <dbReference type="ChEBI" id="CHEBI:29101"/>
        <label>1</label>
    </ligand>
</feature>
<feature type="binding site" evidence="1">
    <location>
        <position position="750"/>
    </location>
    <ligand>
        <name>Zn(2+)</name>
        <dbReference type="ChEBI" id="CHEBI:29105"/>
    </ligand>
</feature>
<feature type="binding site" evidence="1">
    <location>
        <position position="751"/>
    </location>
    <ligand>
        <name>Zn(2+)</name>
        <dbReference type="ChEBI" id="CHEBI:29105"/>
    </ligand>
</feature>
<feature type="binding site" evidence="1">
    <location>
        <position position="753"/>
    </location>
    <ligand>
        <name>K(+)</name>
        <dbReference type="ChEBI" id="CHEBI:29103"/>
        <label>3</label>
    </ligand>
</feature>
<feature type="binding site" evidence="1">
    <location>
        <position position="753"/>
    </location>
    <ligand>
        <name>Na(+)</name>
        <dbReference type="ChEBI" id="CHEBI:29101"/>
        <label>2</label>
    </ligand>
</feature>
<feature type="binding site" evidence="1">
    <location>
        <position position="756"/>
    </location>
    <ligand>
        <name>K(+)</name>
        <dbReference type="ChEBI" id="CHEBI:29103"/>
        <label>3</label>
    </ligand>
</feature>
<feature type="binding site" evidence="1">
    <location>
        <position position="756"/>
    </location>
    <ligand>
        <name>Na(+)</name>
        <dbReference type="ChEBI" id="CHEBI:29101"/>
        <label>2</label>
    </ligand>
</feature>
<feature type="binding site" evidence="1">
    <location>
        <position position="758"/>
    </location>
    <ligand>
        <name>Zn(2+)</name>
        <dbReference type="ChEBI" id="CHEBI:29105"/>
    </ligand>
</feature>
<feature type="binding site" evidence="1">
    <location>
        <position position="760"/>
    </location>
    <ligand>
        <name>Zn(2+)</name>
        <dbReference type="ChEBI" id="CHEBI:29105"/>
    </ligand>
</feature>
<feature type="binding site" evidence="1">
    <location>
        <position position="761"/>
    </location>
    <ligand>
        <name>K(+)</name>
        <dbReference type="ChEBI" id="CHEBI:29103"/>
        <label>3</label>
    </ligand>
</feature>
<feature type="binding site" evidence="1">
    <location>
        <position position="769"/>
    </location>
    <ligand>
        <name>K(+)</name>
        <dbReference type="ChEBI" id="CHEBI:29103"/>
        <label>3</label>
    </ligand>
</feature>
<feature type="binding site" evidence="1">
    <location>
        <position position="770"/>
    </location>
    <ligand>
        <name>K(+)</name>
        <dbReference type="ChEBI" id="CHEBI:29103"/>
        <label>2</label>
    </ligand>
</feature>
<feature type="binding site" evidence="1">
    <location>
        <position position="771"/>
    </location>
    <ligand>
        <name>Na(+)</name>
        <dbReference type="ChEBI" id="CHEBI:29101"/>
        <label>2</label>
    </ligand>
</feature>
<feature type="binding site" evidence="1">
    <location>
        <position position="779"/>
    </location>
    <ligand>
        <name>K(+)</name>
        <dbReference type="ChEBI" id="CHEBI:29103"/>
        <label>2</label>
    </ligand>
</feature>
<feature type="binding site" evidence="1">
    <location>
        <position position="810"/>
    </location>
    <ligand>
        <name>K(+)</name>
        <dbReference type="ChEBI" id="CHEBI:29103"/>
        <label>2</label>
    </ligand>
</feature>
<feature type="binding site" evidence="1">
    <location>
        <position position="812"/>
    </location>
    <ligand>
        <name>K(+)</name>
        <dbReference type="ChEBI" id="CHEBI:29103"/>
        <label>2</label>
    </ligand>
</feature>
<feature type="binding site" evidence="1">
    <location>
        <position position="834"/>
    </location>
    <ligand>
        <name>K(+)</name>
        <dbReference type="ChEBI" id="CHEBI:29103"/>
        <label>2</label>
    </ligand>
</feature>
<feature type="binding site" evidence="1">
    <location>
        <position position="857"/>
    </location>
    <ligand>
        <name>K(+)</name>
        <dbReference type="ChEBI" id="CHEBI:29103"/>
        <label>2</label>
    </ligand>
</feature>
<feature type="glycosylation site" description="N-linked (GlcNAc...) asparagine" evidence="4">
    <location>
        <position position="131"/>
    </location>
</feature>
<feature type="glycosylation site" description="N-linked (GlcNAc...) asparagine" evidence="4">
    <location>
        <position position="136"/>
    </location>
</feature>
<protein>
    <recommendedName>
        <fullName>Potassium channel subfamily T member 1</fullName>
    </recommendedName>
    <alternativeName>
        <fullName>Sequence like a calcium-activated potassium channel subunit</fullName>
    </alternativeName>
</protein>
<comment type="function">
    <text evidence="1 2 3 7">Sodium-activated K(+) channel (PubMed:28111072). Acts as an important mediator of neuronal membrane excitability (By similarity). Contributes to the delayed outward currents (By similarity). Regulates of neuronal bursting in sensory neurons. Contributes to synaptic development and plasticity (By similarity).</text>
</comment>
<comment type="catalytic activity">
    <reaction evidence="1">
        <text>K(+)(in) = K(+)(out)</text>
        <dbReference type="Rhea" id="RHEA:29463"/>
        <dbReference type="ChEBI" id="CHEBI:29103"/>
    </reaction>
</comment>
<comment type="activity regulation">
    <text evidence="1 3 7">Activated by high intracellular Na(+) (PubMed:28111072). In addition to activation by Na(+), is cooperatively activated by intracellular Cl(-) levels (By similarity). Inhibited by Zn(2+) (By similarity). Activated upon stimulation of G-protein coupled receptors, such as CHRM1 and GRIA1 (By similarity).</text>
</comment>
<comment type="subunit">
    <text evidence="1 3">Homotetramer; which constitutes the Na(+)-activated K(+) channel (By similarity). Interacts with KCNT2; these heterodimer channels differ from the homomers in their unitary conductance, kinetic behavior, subcellular localization, and response to activation of protein kinase C (By similarity).</text>
</comment>
<comment type="subcellular location">
    <subcellularLocation>
        <location evidence="3">Cell membrane</location>
        <topology evidence="7">Multi-pass membrane protein</topology>
    </subcellularLocation>
</comment>
<comment type="domain">
    <text evidence="1">The cytoplasmic gating ring domain of the closed KCNT1 channel harbors multiple K(+) and Zn(2+) sites, which stabilize the channel in the closed conformation. Under low-Na(+) conditions, the abundant cytoplasmic K(+) ions stabilize the gating ring domain in a closed conformation. The open KCNT1 structure contains at least two Na(+)-sensitive sites in the RCKs where Na(+) binding induces expansion and rotation of the gating ring that opens the inner gate.</text>
</comment>
<comment type="domain">
    <text evidence="3">The cytoplasmic N-terminal domain facilitates the localization of heteromeric KCNT1/KCNT2 channels to the plasma membrane.</text>
</comment>
<comment type="PTM">
    <text evidence="3">Phosphorylated by protein kinase C. Phosphorylation of the C-terminal domain increases channel activity.</text>
</comment>
<comment type="similarity">
    <text evidence="9">Belongs to the potassium channel family. Calcium-activated (TC 1.A.1.3) subfamily. KCa4.1/KCNT1 sub-subfamily.</text>
</comment>
<organism>
    <name type="scientific">Gallus gallus</name>
    <name type="common">Chicken</name>
    <dbReference type="NCBI Taxonomy" id="9031"/>
    <lineage>
        <taxon>Eukaryota</taxon>
        <taxon>Metazoa</taxon>
        <taxon>Chordata</taxon>
        <taxon>Craniata</taxon>
        <taxon>Vertebrata</taxon>
        <taxon>Euteleostomi</taxon>
        <taxon>Archelosauria</taxon>
        <taxon>Archosauria</taxon>
        <taxon>Dinosauria</taxon>
        <taxon>Saurischia</taxon>
        <taxon>Theropoda</taxon>
        <taxon>Coelurosauria</taxon>
        <taxon>Aves</taxon>
        <taxon>Neognathae</taxon>
        <taxon>Galloanserae</taxon>
        <taxon>Galliformes</taxon>
        <taxon>Phasianidae</taxon>
        <taxon>Phasianinae</taxon>
        <taxon>Gallus</taxon>
    </lineage>
</organism>
<gene>
    <name type="primary">KCNT1</name>
    <name type="synonym">SLACK</name>
    <name evidence="8" type="synonym">Slo2.2</name>
</gene>